<dbReference type="EC" id="1.5.1.5" evidence="1"/>
<dbReference type="EC" id="3.5.4.9" evidence="1"/>
<dbReference type="EMBL" id="CP001185">
    <property type="protein sequence ID" value="ACJ74706.1"/>
    <property type="molecule type" value="Genomic_DNA"/>
</dbReference>
<dbReference type="RefSeq" id="WP_012579409.1">
    <property type="nucleotide sequence ID" value="NC_011653.1"/>
</dbReference>
<dbReference type="SMR" id="B7IF42"/>
<dbReference type="STRING" id="484019.THA_201"/>
<dbReference type="KEGG" id="taf:THA_201"/>
<dbReference type="eggNOG" id="COG0190">
    <property type="taxonomic scope" value="Bacteria"/>
</dbReference>
<dbReference type="HOGENOM" id="CLU_034045_3_0_0"/>
<dbReference type="OrthoDB" id="9803580at2"/>
<dbReference type="UniPathway" id="UPA00193"/>
<dbReference type="Proteomes" id="UP000002453">
    <property type="component" value="Chromosome"/>
</dbReference>
<dbReference type="GO" id="GO:0005829">
    <property type="term" value="C:cytosol"/>
    <property type="evidence" value="ECO:0007669"/>
    <property type="project" value="TreeGrafter"/>
</dbReference>
<dbReference type="GO" id="GO:0004477">
    <property type="term" value="F:methenyltetrahydrofolate cyclohydrolase activity"/>
    <property type="evidence" value="ECO:0007669"/>
    <property type="project" value="UniProtKB-UniRule"/>
</dbReference>
<dbReference type="GO" id="GO:0004488">
    <property type="term" value="F:methylenetetrahydrofolate dehydrogenase (NADP+) activity"/>
    <property type="evidence" value="ECO:0007669"/>
    <property type="project" value="UniProtKB-UniRule"/>
</dbReference>
<dbReference type="GO" id="GO:0000105">
    <property type="term" value="P:L-histidine biosynthetic process"/>
    <property type="evidence" value="ECO:0007669"/>
    <property type="project" value="UniProtKB-KW"/>
</dbReference>
<dbReference type="GO" id="GO:0009086">
    <property type="term" value="P:methionine biosynthetic process"/>
    <property type="evidence" value="ECO:0007669"/>
    <property type="project" value="UniProtKB-KW"/>
</dbReference>
<dbReference type="GO" id="GO:0006164">
    <property type="term" value="P:purine nucleotide biosynthetic process"/>
    <property type="evidence" value="ECO:0007669"/>
    <property type="project" value="UniProtKB-KW"/>
</dbReference>
<dbReference type="GO" id="GO:0035999">
    <property type="term" value="P:tetrahydrofolate interconversion"/>
    <property type="evidence" value="ECO:0007669"/>
    <property type="project" value="UniProtKB-UniRule"/>
</dbReference>
<dbReference type="CDD" id="cd01080">
    <property type="entry name" value="NAD_bind_m-THF_DH_Cyclohyd"/>
    <property type="match status" value="1"/>
</dbReference>
<dbReference type="Gene3D" id="3.40.50.10860">
    <property type="entry name" value="Leucine Dehydrogenase, chain A, domain 1"/>
    <property type="match status" value="1"/>
</dbReference>
<dbReference type="Gene3D" id="3.40.50.720">
    <property type="entry name" value="NAD(P)-binding Rossmann-like Domain"/>
    <property type="match status" value="1"/>
</dbReference>
<dbReference type="HAMAP" id="MF_01576">
    <property type="entry name" value="THF_DHG_CYH"/>
    <property type="match status" value="1"/>
</dbReference>
<dbReference type="InterPro" id="IPR046346">
    <property type="entry name" value="Aminoacid_DH-like_N_sf"/>
</dbReference>
<dbReference type="InterPro" id="IPR036291">
    <property type="entry name" value="NAD(P)-bd_dom_sf"/>
</dbReference>
<dbReference type="InterPro" id="IPR000672">
    <property type="entry name" value="THF_DH/CycHdrlase"/>
</dbReference>
<dbReference type="InterPro" id="IPR020630">
    <property type="entry name" value="THF_DH/CycHdrlase_cat_dom"/>
</dbReference>
<dbReference type="InterPro" id="IPR020631">
    <property type="entry name" value="THF_DH/CycHdrlase_NAD-bd_dom"/>
</dbReference>
<dbReference type="PANTHER" id="PTHR48099:SF5">
    <property type="entry name" value="C-1-TETRAHYDROFOLATE SYNTHASE, CYTOPLASMIC"/>
    <property type="match status" value="1"/>
</dbReference>
<dbReference type="PANTHER" id="PTHR48099">
    <property type="entry name" value="C-1-TETRAHYDROFOLATE SYNTHASE, CYTOPLASMIC-RELATED"/>
    <property type="match status" value="1"/>
</dbReference>
<dbReference type="Pfam" id="PF00763">
    <property type="entry name" value="THF_DHG_CYH"/>
    <property type="match status" value="1"/>
</dbReference>
<dbReference type="Pfam" id="PF02882">
    <property type="entry name" value="THF_DHG_CYH_C"/>
    <property type="match status" value="1"/>
</dbReference>
<dbReference type="PRINTS" id="PR00085">
    <property type="entry name" value="THFDHDRGNASE"/>
</dbReference>
<dbReference type="SUPFAM" id="SSF53223">
    <property type="entry name" value="Aminoacid dehydrogenase-like, N-terminal domain"/>
    <property type="match status" value="1"/>
</dbReference>
<dbReference type="SUPFAM" id="SSF51735">
    <property type="entry name" value="NAD(P)-binding Rossmann-fold domains"/>
    <property type="match status" value="1"/>
</dbReference>
<reference key="1">
    <citation type="journal article" date="2009" name="J. Bacteriol.">
        <title>The genome of Thermosipho africanus TCF52B: lateral genetic connections to the Firmicutes and Archaea.</title>
        <authorList>
            <person name="Nesboe C.L."/>
            <person name="Bapteste E."/>
            <person name="Curtis B."/>
            <person name="Dahle H."/>
            <person name="Lopez P."/>
            <person name="Macleod D."/>
            <person name="Dlutek M."/>
            <person name="Bowman S."/>
            <person name="Zhaxybayeva O."/>
            <person name="Birkeland N.-K."/>
            <person name="Doolittle W.F."/>
        </authorList>
    </citation>
    <scope>NUCLEOTIDE SEQUENCE [LARGE SCALE GENOMIC DNA]</scope>
    <source>
        <strain>TCF52B</strain>
    </source>
</reference>
<comment type="function">
    <text evidence="1">Catalyzes the oxidation of 5,10-methylenetetrahydrofolate to 5,10-methenyltetrahydrofolate and then the hydrolysis of 5,10-methenyltetrahydrofolate to 10-formyltetrahydrofolate.</text>
</comment>
<comment type="catalytic activity">
    <reaction evidence="1">
        <text>(6R)-5,10-methylene-5,6,7,8-tetrahydrofolate + NADP(+) = (6R)-5,10-methenyltetrahydrofolate + NADPH</text>
        <dbReference type="Rhea" id="RHEA:22812"/>
        <dbReference type="ChEBI" id="CHEBI:15636"/>
        <dbReference type="ChEBI" id="CHEBI:57455"/>
        <dbReference type="ChEBI" id="CHEBI:57783"/>
        <dbReference type="ChEBI" id="CHEBI:58349"/>
        <dbReference type="EC" id="1.5.1.5"/>
    </reaction>
</comment>
<comment type="catalytic activity">
    <reaction evidence="1">
        <text>(6R)-5,10-methenyltetrahydrofolate + H2O = (6R)-10-formyltetrahydrofolate + H(+)</text>
        <dbReference type="Rhea" id="RHEA:23700"/>
        <dbReference type="ChEBI" id="CHEBI:15377"/>
        <dbReference type="ChEBI" id="CHEBI:15378"/>
        <dbReference type="ChEBI" id="CHEBI:57455"/>
        <dbReference type="ChEBI" id="CHEBI:195366"/>
        <dbReference type="EC" id="3.5.4.9"/>
    </reaction>
</comment>
<comment type="pathway">
    <text evidence="1">One-carbon metabolism; tetrahydrofolate interconversion.</text>
</comment>
<comment type="subunit">
    <text evidence="1">Homodimer.</text>
</comment>
<comment type="similarity">
    <text evidence="1">Belongs to the tetrahydrofolate dehydrogenase/cyclohydrolase family.</text>
</comment>
<evidence type="ECO:0000255" key="1">
    <source>
        <dbReference type="HAMAP-Rule" id="MF_01576"/>
    </source>
</evidence>
<name>FOLD_THEAB</name>
<feature type="chain" id="PRO_1000147531" description="Bifunctional protein FolD">
    <location>
        <begin position="1"/>
        <end position="271"/>
    </location>
</feature>
<feature type="binding site" evidence="1">
    <location>
        <begin position="154"/>
        <end position="156"/>
    </location>
    <ligand>
        <name>NADP(+)</name>
        <dbReference type="ChEBI" id="CHEBI:58349"/>
    </ligand>
</feature>
<feature type="binding site" evidence="1">
    <location>
        <position position="181"/>
    </location>
    <ligand>
        <name>NADP(+)</name>
        <dbReference type="ChEBI" id="CHEBI:58349"/>
    </ligand>
</feature>
<feature type="binding site" evidence="1">
    <location>
        <position position="222"/>
    </location>
    <ligand>
        <name>NADP(+)</name>
        <dbReference type="ChEBI" id="CHEBI:58349"/>
    </ligand>
</feature>
<protein>
    <recommendedName>
        <fullName evidence="1">Bifunctional protein FolD</fullName>
    </recommendedName>
    <domain>
        <recommendedName>
            <fullName evidence="1">Methylenetetrahydrofolate dehydrogenase</fullName>
            <ecNumber evidence="1">1.5.1.5</ecNumber>
        </recommendedName>
    </domain>
    <domain>
        <recommendedName>
            <fullName evidence="1">Methenyltetrahydrofolate cyclohydrolase</fullName>
            <ecNumber evidence="1">3.5.4.9</ecNumber>
        </recommendedName>
    </domain>
</protein>
<keyword id="KW-0028">Amino-acid biosynthesis</keyword>
<keyword id="KW-0368">Histidine biosynthesis</keyword>
<keyword id="KW-0378">Hydrolase</keyword>
<keyword id="KW-0486">Methionine biosynthesis</keyword>
<keyword id="KW-0511">Multifunctional enzyme</keyword>
<keyword id="KW-0521">NADP</keyword>
<keyword id="KW-0554">One-carbon metabolism</keyword>
<keyword id="KW-0560">Oxidoreductase</keyword>
<keyword id="KW-0658">Purine biosynthesis</keyword>
<keyword id="KW-1185">Reference proteome</keyword>
<proteinExistence type="inferred from homology"/>
<organism>
    <name type="scientific">Thermosipho africanus (strain TCF52B)</name>
    <dbReference type="NCBI Taxonomy" id="484019"/>
    <lineage>
        <taxon>Bacteria</taxon>
        <taxon>Thermotogati</taxon>
        <taxon>Thermotogota</taxon>
        <taxon>Thermotogae</taxon>
        <taxon>Thermotogales</taxon>
        <taxon>Fervidobacteriaceae</taxon>
        <taxon>Thermosipho</taxon>
    </lineage>
</organism>
<accession>B7IF42</accession>
<sequence length="271" mass="29955">MLIDVKPLYSEIKNLIMDRMSKLKKVPKLVAVTYKPDPSTISYLKSQEKAAKRFGLDYEIFEASNSIEVLEKLRKLSEDKSVNGIFVTHPLPELDEMLVFENLSPEKDIEGRHPYNLGMLMYGNEFFAPCTAEAVVKILENVTEITGKNVVIIGRSTTVGKPLATMLLRRDRSATVTVCHTKTRNLPEITRNADIIVAAAGKARLVTKEMVKSDSIVIDVGINVVDGKIVGDVKEDVSEIAKVTPVPGGVGRITTALLMEHVVKSAEKMNF</sequence>
<gene>
    <name evidence="1" type="primary">folD</name>
    <name type="ordered locus">THA_201</name>
</gene>